<sequence length="389" mass="42345">MPLPTNQLRLAMVAGEPSGDLLAASLLGGLRERLPESAQYYGIGGQRMIAQGFDSHWQMDKLTVRGYVEALGQIPEILRIRGELKRQLLAERPDAFIGVDAPDFNFSVEQAARDAGIPSIHFVCPSIWAWRGGRIKKIAKSVDHMLCLFPFEPAILDKAGVASTYVGHPLADDIPLEPDTHGARIALGLPADGPVIAVLPGSRRSEIALIGPTFFAAMALMQQREPGVRFVMPAATPALRELLQPLVDAHPQLALTITDGRSQVAMTAADAILVKSGTVTLEAALLKKPMVISYKVPWLTGQIMRRQGYLPYVGLPNILAGRFVVPELLQHFATPEALADATLTQLRDDANRRTLTEVFTEMHLSLRQNTAAKAAEAVVRVLEQRKGRA</sequence>
<feature type="chain" id="PRO_1000191465" description="Lipid-A-disaccharide synthase">
    <location>
        <begin position="1"/>
        <end position="389"/>
    </location>
</feature>
<keyword id="KW-0328">Glycosyltransferase</keyword>
<keyword id="KW-0441">Lipid A biosynthesis</keyword>
<keyword id="KW-0444">Lipid biosynthesis</keyword>
<keyword id="KW-0443">Lipid metabolism</keyword>
<keyword id="KW-0808">Transferase</keyword>
<reference key="1">
    <citation type="journal article" date="2009" name="J. Bacteriol.">
        <title>The genome of Burkholderia cenocepacia J2315, an epidemic pathogen of cystic fibrosis patients.</title>
        <authorList>
            <person name="Holden M.T."/>
            <person name="Seth-Smith H.M."/>
            <person name="Crossman L.C."/>
            <person name="Sebaihia M."/>
            <person name="Bentley S.D."/>
            <person name="Cerdeno-Tarraga A.M."/>
            <person name="Thomson N.R."/>
            <person name="Bason N."/>
            <person name="Quail M.A."/>
            <person name="Sharp S."/>
            <person name="Cherevach I."/>
            <person name="Churcher C."/>
            <person name="Goodhead I."/>
            <person name="Hauser H."/>
            <person name="Holroyd N."/>
            <person name="Mungall K."/>
            <person name="Scott P."/>
            <person name="Walker D."/>
            <person name="White B."/>
            <person name="Rose H."/>
            <person name="Iversen P."/>
            <person name="Mil-Homens D."/>
            <person name="Rocha E.P."/>
            <person name="Fialho A.M."/>
            <person name="Baldwin A."/>
            <person name="Dowson C."/>
            <person name="Barrell B.G."/>
            <person name="Govan J.R."/>
            <person name="Vandamme P."/>
            <person name="Hart C.A."/>
            <person name="Mahenthiralingam E."/>
            <person name="Parkhill J."/>
        </authorList>
    </citation>
    <scope>NUCLEOTIDE SEQUENCE [LARGE SCALE GENOMIC DNA]</scope>
    <source>
        <strain>ATCC BAA-245 / DSM 16553 / LMG 16656 / NCTC 13227 / J2315 / CF5610</strain>
    </source>
</reference>
<organism>
    <name type="scientific">Burkholderia cenocepacia (strain ATCC BAA-245 / DSM 16553 / LMG 16656 / NCTC 13227 / J2315 / CF5610)</name>
    <name type="common">Burkholderia cepacia (strain J2315)</name>
    <dbReference type="NCBI Taxonomy" id="216591"/>
    <lineage>
        <taxon>Bacteria</taxon>
        <taxon>Pseudomonadati</taxon>
        <taxon>Pseudomonadota</taxon>
        <taxon>Betaproteobacteria</taxon>
        <taxon>Burkholderiales</taxon>
        <taxon>Burkholderiaceae</taxon>
        <taxon>Burkholderia</taxon>
        <taxon>Burkholderia cepacia complex</taxon>
    </lineage>
</organism>
<accession>B4ECL8</accession>
<comment type="function">
    <text evidence="1">Condensation of UDP-2,3-diacylglucosamine and 2,3-diacylglucosamine-1-phosphate to form lipid A disaccharide, a precursor of lipid A, a phosphorylated glycolipid that anchors the lipopolysaccharide to the outer membrane of the cell.</text>
</comment>
<comment type="catalytic activity">
    <reaction evidence="1">
        <text>a lipid X + a UDP-2-N,3-O-bis[(3R)-3-hydroxyacyl]-alpha-D-glucosamine = a lipid A disaccharide + UDP + H(+)</text>
        <dbReference type="Rhea" id="RHEA:67828"/>
        <dbReference type="ChEBI" id="CHEBI:15378"/>
        <dbReference type="ChEBI" id="CHEBI:58223"/>
        <dbReference type="ChEBI" id="CHEBI:137748"/>
        <dbReference type="ChEBI" id="CHEBI:176338"/>
        <dbReference type="ChEBI" id="CHEBI:176343"/>
        <dbReference type="EC" id="2.4.1.182"/>
    </reaction>
</comment>
<comment type="pathway">
    <text evidence="1">Bacterial outer membrane biogenesis; LPS lipid A biosynthesis.</text>
</comment>
<comment type="similarity">
    <text evidence="1">Belongs to the LpxB family.</text>
</comment>
<name>LPXB_BURCJ</name>
<evidence type="ECO:0000255" key="1">
    <source>
        <dbReference type="HAMAP-Rule" id="MF_00392"/>
    </source>
</evidence>
<gene>
    <name evidence="1" type="primary">lpxB</name>
    <name type="ordered locus">BceJ2315_20400</name>
    <name type="ORF">BCAL2078</name>
</gene>
<dbReference type="EC" id="2.4.1.182" evidence="1"/>
<dbReference type="EMBL" id="AM747720">
    <property type="protein sequence ID" value="CAR52378.1"/>
    <property type="molecule type" value="Genomic_DNA"/>
</dbReference>
<dbReference type="RefSeq" id="WP_006483810.1">
    <property type="nucleotide sequence ID" value="NC_011000.1"/>
</dbReference>
<dbReference type="SMR" id="B4ECL8"/>
<dbReference type="CAZy" id="GT19">
    <property type="family name" value="Glycosyltransferase Family 19"/>
</dbReference>
<dbReference type="GeneID" id="56558568"/>
<dbReference type="KEGG" id="bcj:BCAL2078"/>
<dbReference type="eggNOG" id="COG0763">
    <property type="taxonomic scope" value="Bacteria"/>
</dbReference>
<dbReference type="HOGENOM" id="CLU_036577_3_0_4"/>
<dbReference type="BioCyc" id="BCEN216591:G1G1V-2278-MONOMER"/>
<dbReference type="UniPathway" id="UPA00973"/>
<dbReference type="Proteomes" id="UP000001035">
    <property type="component" value="Chromosome 1"/>
</dbReference>
<dbReference type="GO" id="GO:0016020">
    <property type="term" value="C:membrane"/>
    <property type="evidence" value="ECO:0007669"/>
    <property type="project" value="GOC"/>
</dbReference>
<dbReference type="GO" id="GO:0008915">
    <property type="term" value="F:lipid-A-disaccharide synthase activity"/>
    <property type="evidence" value="ECO:0007669"/>
    <property type="project" value="UniProtKB-UniRule"/>
</dbReference>
<dbReference type="GO" id="GO:0005543">
    <property type="term" value="F:phospholipid binding"/>
    <property type="evidence" value="ECO:0007669"/>
    <property type="project" value="TreeGrafter"/>
</dbReference>
<dbReference type="GO" id="GO:0009245">
    <property type="term" value="P:lipid A biosynthetic process"/>
    <property type="evidence" value="ECO:0007669"/>
    <property type="project" value="UniProtKB-UniRule"/>
</dbReference>
<dbReference type="HAMAP" id="MF_00392">
    <property type="entry name" value="LpxB"/>
    <property type="match status" value="1"/>
</dbReference>
<dbReference type="InterPro" id="IPR003835">
    <property type="entry name" value="Glyco_trans_19"/>
</dbReference>
<dbReference type="NCBIfam" id="TIGR00215">
    <property type="entry name" value="lpxB"/>
    <property type="match status" value="1"/>
</dbReference>
<dbReference type="PANTHER" id="PTHR30372">
    <property type="entry name" value="LIPID-A-DISACCHARIDE SYNTHASE"/>
    <property type="match status" value="1"/>
</dbReference>
<dbReference type="PANTHER" id="PTHR30372:SF4">
    <property type="entry name" value="LIPID-A-DISACCHARIDE SYNTHASE, MITOCHONDRIAL-RELATED"/>
    <property type="match status" value="1"/>
</dbReference>
<dbReference type="Pfam" id="PF02684">
    <property type="entry name" value="LpxB"/>
    <property type="match status" value="1"/>
</dbReference>
<dbReference type="SUPFAM" id="SSF53756">
    <property type="entry name" value="UDP-Glycosyltransferase/glycogen phosphorylase"/>
    <property type="match status" value="1"/>
</dbReference>
<proteinExistence type="inferred from homology"/>
<protein>
    <recommendedName>
        <fullName evidence="1">Lipid-A-disaccharide synthase</fullName>
        <ecNumber evidence="1">2.4.1.182</ecNumber>
    </recommendedName>
</protein>